<proteinExistence type="evidence at transcript level"/>
<dbReference type="EC" id="3.1.-.-" evidence="1"/>
<dbReference type="EMBL" id="BC123264">
    <property type="protein sequence ID" value="AAI23265.1"/>
    <property type="molecule type" value="mRNA"/>
</dbReference>
<dbReference type="RefSeq" id="NP_001090376.1">
    <property type="nucleotide sequence ID" value="NM_001096907.1"/>
</dbReference>
<dbReference type="SMR" id="Q0IH86"/>
<dbReference type="DNASU" id="779287"/>
<dbReference type="AGR" id="Xenbase:XB-GENE-6252778"/>
<dbReference type="Xenbase" id="XB-GENE-6252778">
    <property type="gene designation" value="slx1a.L"/>
</dbReference>
<dbReference type="Proteomes" id="UP000186698">
    <property type="component" value="Unplaced"/>
</dbReference>
<dbReference type="Bgee" id="779287">
    <property type="expression patterns" value="Expressed in oocyte and 19 other cell types or tissues"/>
</dbReference>
<dbReference type="GO" id="GO:0033557">
    <property type="term" value="C:Slx1-Slx4 complex"/>
    <property type="evidence" value="ECO:0000318"/>
    <property type="project" value="GO_Central"/>
</dbReference>
<dbReference type="GO" id="GO:0017108">
    <property type="term" value="F:5'-flap endonuclease activity"/>
    <property type="evidence" value="ECO:0000318"/>
    <property type="project" value="GO_Central"/>
</dbReference>
<dbReference type="GO" id="GO:0008821">
    <property type="term" value="F:crossover junction DNA endonuclease activity"/>
    <property type="evidence" value="ECO:0000318"/>
    <property type="project" value="GO_Central"/>
</dbReference>
<dbReference type="GO" id="GO:0008270">
    <property type="term" value="F:zinc ion binding"/>
    <property type="evidence" value="ECO:0007669"/>
    <property type="project" value="UniProtKB-KW"/>
</dbReference>
<dbReference type="GO" id="GO:0000724">
    <property type="term" value="P:double-strand break repair via homologous recombination"/>
    <property type="evidence" value="ECO:0000318"/>
    <property type="project" value="GO_Central"/>
</dbReference>
<dbReference type="CDD" id="cd10455">
    <property type="entry name" value="GIY-YIG_SLX1"/>
    <property type="match status" value="1"/>
</dbReference>
<dbReference type="FunFam" id="3.30.40.10:FF:000392">
    <property type="entry name" value="Structure-specific endonuclease subunit SLX1"/>
    <property type="match status" value="1"/>
</dbReference>
<dbReference type="FunFam" id="3.40.1440.10:FF:000003">
    <property type="entry name" value="Structure-specific endonuclease subunit SLX1"/>
    <property type="match status" value="1"/>
</dbReference>
<dbReference type="Gene3D" id="3.40.1440.10">
    <property type="entry name" value="GIY-YIG endonuclease"/>
    <property type="match status" value="1"/>
</dbReference>
<dbReference type="Gene3D" id="3.30.40.10">
    <property type="entry name" value="Zinc/RING finger domain, C3HC4 (zinc finger)"/>
    <property type="match status" value="1"/>
</dbReference>
<dbReference type="HAMAP" id="MF_03100">
    <property type="entry name" value="Endonuc_su_Slx1"/>
    <property type="match status" value="1"/>
</dbReference>
<dbReference type="InterPro" id="IPR000305">
    <property type="entry name" value="GIY-YIG_endonuc"/>
</dbReference>
<dbReference type="InterPro" id="IPR035901">
    <property type="entry name" value="GIY-YIG_endonuc_sf"/>
</dbReference>
<dbReference type="InterPro" id="IPR027520">
    <property type="entry name" value="Slx1"/>
</dbReference>
<dbReference type="InterPro" id="IPR048749">
    <property type="entry name" value="SLX1_C"/>
</dbReference>
<dbReference type="InterPro" id="IPR050381">
    <property type="entry name" value="SLX1_endonuclease"/>
</dbReference>
<dbReference type="InterPro" id="IPR013083">
    <property type="entry name" value="Znf_RING/FYVE/PHD"/>
</dbReference>
<dbReference type="PANTHER" id="PTHR20208">
    <property type="entry name" value="STRUCTURE-SPECIFIC ENDONUCLEASE SUBUNIT SLX1"/>
    <property type="match status" value="1"/>
</dbReference>
<dbReference type="PANTHER" id="PTHR20208:SF10">
    <property type="entry name" value="STRUCTURE-SPECIFIC ENDONUCLEASE SUBUNIT SLX1"/>
    <property type="match status" value="1"/>
</dbReference>
<dbReference type="Pfam" id="PF01541">
    <property type="entry name" value="GIY-YIG"/>
    <property type="match status" value="1"/>
</dbReference>
<dbReference type="Pfam" id="PF21202">
    <property type="entry name" value="SLX1_C"/>
    <property type="match status" value="1"/>
</dbReference>
<dbReference type="SUPFAM" id="SSF82771">
    <property type="entry name" value="GIY-YIG endonuclease"/>
    <property type="match status" value="1"/>
</dbReference>
<dbReference type="PROSITE" id="PS50164">
    <property type="entry name" value="GIY_YIG"/>
    <property type="match status" value="1"/>
</dbReference>
<keyword id="KW-0227">DNA damage</keyword>
<keyword id="KW-0233">DNA recombination</keyword>
<keyword id="KW-0234">DNA repair</keyword>
<keyword id="KW-0255">Endonuclease</keyword>
<keyword id="KW-0378">Hydrolase</keyword>
<keyword id="KW-0479">Metal-binding</keyword>
<keyword id="KW-0540">Nuclease</keyword>
<keyword id="KW-0539">Nucleus</keyword>
<keyword id="KW-1185">Reference proteome</keyword>
<keyword id="KW-0862">Zinc</keyword>
<keyword id="KW-0863">Zinc-finger</keyword>
<accession>Q0IH86</accession>
<name>SLX1_XENLA</name>
<comment type="function">
    <text evidence="1">Catalytic subunit of the slx1-slx4 structure-specific endonuclease that resolves DNA secondary structures generated during DNA repair and recombination. Has endonuclease activity towards branched DNA substrates, introducing single-strand cuts in duplex DNA close to junctions with ss-DNA.</text>
</comment>
<comment type="cofactor">
    <cofactor evidence="1">
        <name>a divalent metal cation</name>
        <dbReference type="ChEBI" id="CHEBI:60240"/>
    </cofactor>
</comment>
<comment type="subunit">
    <text evidence="1">Forms a heterodimer with slx4.</text>
</comment>
<comment type="subcellular location">
    <subcellularLocation>
        <location evidence="1">Nucleus</location>
    </subcellularLocation>
</comment>
<comment type="similarity">
    <text evidence="1">Belongs to the SLX1 family.</text>
</comment>
<reference key="1">
    <citation type="submission" date="2006-09" db="EMBL/GenBank/DDBJ databases">
        <authorList>
            <consortium name="NIH - Xenopus Gene Collection (XGC) project"/>
        </authorList>
    </citation>
    <scope>NUCLEOTIDE SEQUENCE [LARGE SCALE MRNA]</scope>
    <source>
        <tissue>Neurula</tissue>
    </source>
</reference>
<sequence length="282" mass="32576">MVVEVEGFYGVYLLFCTNPKYKGRIYIGFTVNPERRIQQHNGGKHKGGAWKTSGRGPWDMVLIVHGFPNDIAALRFEWAWQHPHVSRRLTHVPRKTKKQSSFDFHLLVLCHMLRVAPWNRLPLTLRWLRQEYRRELPLLLQPPLHMPLAFGQVRARPIPKGEKEKGRLGENRAEETEQEVILLGDAVVQRCRVCYERVQDKDDSLHCFHPGCTLTAHIMCLAKLFLLNEPQNLIPVEGLCPSCGHSLLWGDLIRHRNGCYGDLEEISSSQAHWGDELHRCSD</sequence>
<organism>
    <name type="scientific">Xenopus laevis</name>
    <name type="common">African clawed frog</name>
    <dbReference type="NCBI Taxonomy" id="8355"/>
    <lineage>
        <taxon>Eukaryota</taxon>
        <taxon>Metazoa</taxon>
        <taxon>Chordata</taxon>
        <taxon>Craniata</taxon>
        <taxon>Vertebrata</taxon>
        <taxon>Euteleostomi</taxon>
        <taxon>Amphibia</taxon>
        <taxon>Batrachia</taxon>
        <taxon>Anura</taxon>
        <taxon>Pipoidea</taxon>
        <taxon>Pipidae</taxon>
        <taxon>Xenopodinae</taxon>
        <taxon>Xenopus</taxon>
        <taxon>Xenopus</taxon>
    </lineage>
</organism>
<gene>
    <name type="primary">slx1a</name>
    <name type="synonym">giyd1</name>
    <name type="synonym">slx1</name>
</gene>
<protein>
    <recommendedName>
        <fullName evidence="1">Structure-specific endonuclease subunit slx1</fullName>
        <ecNumber evidence="1">3.1.-.-</ecNumber>
    </recommendedName>
    <alternativeName>
        <fullName evidence="1">GIY-YIG domain-containing protein 1</fullName>
    </alternativeName>
</protein>
<evidence type="ECO:0000255" key="1">
    <source>
        <dbReference type="HAMAP-Rule" id="MF_03100"/>
    </source>
</evidence>
<feature type="chain" id="PRO_0000332123" description="Structure-specific endonuclease subunit slx1">
    <location>
        <begin position="1"/>
        <end position="282"/>
    </location>
</feature>
<feature type="domain" description="GIY-YIG" evidence="1">
    <location>
        <begin position="7"/>
        <end position="97"/>
    </location>
</feature>
<feature type="zinc finger region" description="SLX1-type" evidence="1">
    <location>
        <begin position="191"/>
        <end position="243"/>
    </location>
</feature>